<feature type="chain" id="PRO_0000257538" description="Putative pre-16S rRNA nuclease">
    <location>
        <begin position="1"/>
        <end position="139"/>
    </location>
</feature>
<reference key="1">
    <citation type="journal article" date="2005" name="J. Bacteriol.">
        <title>Genomic sequence of an otitis media isolate of nontypeable Haemophilus influenzae: comparative study with H. influenzae serotype d, strain KW20.</title>
        <authorList>
            <person name="Harrison A."/>
            <person name="Dyer D.W."/>
            <person name="Gillaspy A."/>
            <person name="Ray W.C."/>
            <person name="Mungur R."/>
            <person name="Carson M.B."/>
            <person name="Zhong H."/>
            <person name="Gipson J."/>
            <person name="Gipson M."/>
            <person name="Johnson L.S."/>
            <person name="Lewis L."/>
            <person name="Bakaletz L.O."/>
            <person name="Munson R.S. Jr."/>
        </authorList>
    </citation>
    <scope>NUCLEOTIDE SEQUENCE [LARGE SCALE GENOMIC DNA]</scope>
    <source>
        <strain>86-028NP</strain>
    </source>
</reference>
<gene>
    <name type="ordered locus">NTHI0416</name>
</gene>
<dbReference type="EC" id="3.1.-.-" evidence="1"/>
<dbReference type="EMBL" id="CP000057">
    <property type="protein sequence ID" value="AAX87359.1"/>
    <property type="molecule type" value="Genomic_DNA"/>
</dbReference>
<dbReference type="SMR" id="Q4QNN8"/>
<dbReference type="KEGG" id="hit:NTHI0416"/>
<dbReference type="HOGENOM" id="CLU_098240_3_0_6"/>
<dbReference type="Proteomes" id="UP000002525">
    <property type="component" value="Chromosome"/>
</dbReference>
<dbReference type="GO" id="GO:0005829">
    <property type="term" value="C:cytosol"/>
    <property type="evidence" value="ECO:0007669"/>
    <property type="project" value="TreeGrafter"/>
</dbReference>
<dbReference type="GO" id="GO:0004518">
    <property type="term" value="F:nuclease activity"/>
    <property type="evidence" value="ECO:0007669"/>
    <property type="project" value="UniProtKB-KW"/>
</dbReference>
<dbReference type="GO" id="GO:0000967">
    <property type="term" value="P:rRNA 5'-end processing"/>
    <property type="evidence" value="ECO:0007669"/>
    <property type="project" value="UniProtKB-UniRule"/>
</dbReference>
<dbReference type="CDD" id="cd16964">
    <property type="entry name" value="YqgF"/>
    <property type="match status" value="1"/>
</dbReference>
<dbReference type="FunFam" id="3.30.420.140:FF:000002">
    <property type="entry name" value="Putative pre-16S rRNA nuclease"/>
    <property type="match status" value="1"/>
</dbReference>
<dbReference type="Gene3D" id="3.30.420.140">
    <property type="entry name" value="YqgF/RNase H-like domain"/>
    <property type="match status" value="1"/>
</dbReference>
<dbReference type="HAMAP" id="MF_00651">
    <property type="entry name" value="Nuclease_YqgF"/>
    <property type="match status" value="1"/>
</dbReference>
<dbReference type="InterPro" id="IPR012337">
    <property type="entry name" value="RNaseH-like_sf"/>
</dbReference>
<dbReference type="InterPro" id="IPR005227">
    <property type="entry name" value="YqgF"/>
</dbReference>
<dbReference type="InterPro" id="IPR006641">
    <property type="entry name" value="YqgF/RNaseH-like_dom"/>
</dbReference>
<dbReference type="InterPro" id="IPR037027">
    <property type="entry name" value="YqgF/RNaseH-like_dom_sf"/>
</dbReference>
<dbReference type="NCBIfam" id="TIGR00250">
    <property type="entry name" value="RNAse_H_YqgF"/>
    <property type="match status" value="1"/>
</dbReference>
<dbReference type="PANTHER" id="PTHR33317">
    <property type="entry name" value="POLYNUCLEOTIDYL TRANSFERASE, RIBONUCLEASE H-LIKE SUPERFAMILY PROTEIN"/>
    <property type="match status" value="1"/>
</dbReference>
<dbReference type="PANTHER" id="PTHR33317:SF4">
    <property type="entry name" value="POLYNUCLEOTIDYL TRANSFERASE, RIBONUCLEASE H-LIKE SUPERFAMILY PROTEIN"/>
    <property type="match status" value="1"/>
</dbReference>
<dbReference type="Pfam" id="PF03652">
    <property type="entry name" value="RuvX"/>
    <property type="match status" value="1"/>
</dbReference>
<dbReference type="SMART" id="SM00732">
    <property type="entry name" value="YqgFc"/>
    <property type="match status" value="1"/>
</dbReference>
<dbReference type="SUPFAM" id="SSF53098">
    <property type="entry name" value="Ribonuclease H-like"/>
    <property type="match status" value="1"/>
</dbReference>
<proteinExistence type="inferred from homology"/>
<sequence>MGITALAFDFGTKSIGCAIGQSITGTAQALPAFKAQDGIPNWEAIEKCLKEWKPDVVIVGLPLNMDGTEQDLTLRARKFANRLQGRFGVNVHLQDERLTTTQARSEIFERGGFKALKKGKIDGVSACLILESWFEYAEY</sequence>
<organism>
    <name type="scientific">Haemophilus influenzae (strain 86-028NP)</name>
    <dbReference type="NCBI Taxonomy" id="281310"/>
    <lineage>
        <taxon>Bacteria</taxon>
        <taxon>Pseudomonadati</taxon>
        <taxon>Pseudomonadota</taxon>
        <taxon>Gammaproteobacteria</taxon>
        <taxon>Pasteurellales</taxon>
        <taxon>Pasteurellaceae</taxon>
        <taxon>Haemophilus</taxon>
    </lineage>
</organism>
<name>YQGF_HAEI8</name>
<accession>Q4QNN8</accession>
<keyword id="KW-0963">Cytoplasm</keyword>
<keyword id="KW-0378">Hydrolase</keyword>
<keyword id="KW-0540">Nuclease</keyword>
<keyword id="KW-0690">Ribosome biogenesis</keyword>
<comment type="function">
    <text evidence="1">Could be a nuclease involved in processing of the 5'-end of pre-16S rRNA.</text>
</comment>
<comment type="subcellular location">
    <subcellularLocation>
        <location evidence="1">Cytoplasm</location>
    </subcellularLocation>
</comment>
<comment type="similarity">
    <text evidence="1">Belongs to the YqgF nuclease family.</text>
</comment>
<protein>
    <recommendedName>
        <fullName evidence="1">Putative pre-16S rRNA nuclease</fullName>
        <ecNumber evidence="1">3.1.-.-</ecNumber>
    </recommendedName>
</protein>
<evidence type="ECO:0000255" key="1">
    <source>
        <dbReference type="HAMAP-Rule" id="MF_00651"/>
    </source>
</evidence>